<organism>
    <name type="scientific">Rhizobium johnstonii (strain DSM 114642 / LMG 32736 / 3841)</name>
    <name type="common">Rhizobium leguminosarum bv. viciae</name>
    <dbReference type="NCBI Taxonomy" id="216596"/>
    <lineage>
        <taxon>Bacteria</taxon>
        <taxon>Pseudomonadati</taxon>
        <taxon>Pseudomonadota</taxon>
        <taxon>Alphaproteobacteria</taxon>
        <taxon>Hyphomicrobiales</taxon>
        <taxon>Rhizobiaceae</taxon>
        <taxon>Rhizobium/Agrobacterium group</taxon>
        <taxon>Rhizobium</taxon>
        <taxon>Rhizobium johnstonii</taxon>
    </lineage>
</organism>
<accession>Q1MIC7</accession>
<sequence>MTMTDPLGDMLTRIRNGASRRKSSVSTPASKLRARVLDVLQSEGYIRGYSVVDFGNGKSELSIELKYYEGASVIREIGRVSKPGRRVYVSVKSIPQVANGLGITILSTPKGVMADHQAREQNVGGEVLCSVF</sequence>
<gene>
    <name evidence="1" type="primary">rpsH</name>
    <name type="ordered locus">RL1788</name>
</gene>
<proteinExistence type="inferred from homology"/>
<keyword id="KW-0687">Ribonucleoprotein</keyword>
<keyword id="KW-0689">Ribosomal protein</keyword>
<keyword id="KW-0694">RNA-binding</keyword>
<keyword id="KW-0699">rRNA-binding</keyword>
<name>RS8_RHIJ3</name>
<comment type="function">
    <text evidence="1">One of the primary rRNA binding proteins, it binds directly to 16S rRNA central domain where it helps coordinate assembly of the platform of the 30S subunit.</text>
</comment>
<comment type="subunit">
    <text evidence="1">Part of the 30S ribosomal subunit. Contacts proteins S5 and S12.</text>
</comment>
<comment type="similarity">
    <text evidence="1">Belongs to the universal ribosomal protein uS8 family.</text>
</comment>
<protein>
    <recommendedName>
        <fullName evidence="1">Small ribosomal subunit protein uS8</fullName>
    </recommendedName>
    <alternativeName>
        <fullName evidence="2">30S ribosomal protein S8</fullName>
    </alternativeName>
</protein>
<evidence type="ECO:0000255" key="1">
    <source>
        <dbReference type="HAMAP-Rule" id="MF_01302"/>
    </source>
</evidence>
<evidence type="ECO:0000305" key="2"/>
<reference key="1">
    <citation type="journal article" date="2006" name="Genome Biol.">
        <title>The genome of Rhizobium leguminosarum has recognizable core and accessory components.</title>
        <authorList>
            <person name="Young J.P.W."/>
            <person name="Crossman L.C."/>
            <person name="Johnston A.W.B."/>
            <person name="Thomson N.R."/>
            <person name="Ghazoui Z.F."/>
            <person name="Hull K.H."/>
            <person name="Wexler M."/>
            <person name="Curson A.R.J."/>
            <person name="Todd J.D."/>
            <person name="Poole P.S."/>
            <person name="Mauchline T.H."/>
            <person name="East A.K."/>
            <person name="Quail M.A."/>
            <person name="Churcher C."/>
            <person name="Arrowsmith C."/>
            <person name="Cherevach I."/>
            <person name="Chillingworth T."/>
            <person name="Clarke K."/>
            <person name="Cronin A."/>
            <person name="Davis P."/>
            <person name="Fraser A."/>
            <person name="Hance Z."/>
            <person name="Hauser H."/>
            <person name="Jagels K."/>
            <person name="Moule S."/>
            <person name="Mungall K."/>
            <person name="Norbertczak H."/>
            <person name="Rabbinowitsch E."/>
            <person name="Sanders M."/>
            <person name="Simmonds M."/>
            <person name="Whitehead S."/>
            <person name="Parkhill J."/>
        </authorList>
    </citation>
    <scope>NUCLEOTIDE SEQUENCE [LARGE SCALE GENOMIC DNA]</scope>
    <source>
        <strain>DSM 114642 / LMG 32736 / 3841</strain>
    </source>
</reference>
<feature type="chain" id="PRO_0000290911" description="Small ribosomal subunit protein uS8">
    <location>
        <begin position="1"/>
        <end position="132"/>
    </location>
</feature>
<dbReference type="EMBL" id="AM236080">
    <property type="protein sequence ID" value="CAK07283.1"/>
    <property type="molecule type" value="Genomic_DNA"/>
</dbReference>
<dbReference type="RefSeq" id="WP_003547562.1">
    <property type="nucleotide sequence ID" value="NC_008380.1"/>
</dbReference>
<dbReference type="SMR" id="Q1MIC7"/>
<dbReference type="EnsemblBacteria" id="CAK07283">
    <property type="protein sequence ID" value="CAK07283"/>
    <property type="gene ID" value="RL1788"/>
</dbReference>
<dbReference type="GeneID" id="75219573"/>
<dbReference type="KEGG" id="rle:RL1788"/>
<dbReference type="eggNOG" id="COG0096">
    <property type="taxonomic scope" value="Bacteria"/>
</dbReference>
<dbReference type="HOGENOM" id="CLU_098428_0_0_5"/>
<dbReference type="Proteomes" id="UP000006575">
    <property type="component" value="Chromosome"/>
</dbReference>
<dbReference type="GO" id="GO:1990904">
    <property type="term" value="C:ribonucleoprotein complex"/>
    <property type="evidence" value="ECO:0007669"/>
    <property type="project" value="UniProtKB-KW"/>
</dbReference>
<dbReference type="GO" id="GO:0005840">
    <property type="term" value="C:ribosome"/>
    <property type="evidence" value="ECO:0007669"/>
    <property type="project" value="UniProtKB-KW"/>
</dbReference>
<dbReference type="GO" id="GO:0019843">
    <property type="term" value="F:rRNA binding"/>
    <property type="evidence" value="ECO:0007669"/>
    <property type="project" value="UniProtKB-UniRule"/>
</dbReference>
<dbReference type="GO" id="GO:0003735">
    <property type="term" value="F:structural constituent of ribosome"/>
    <property type="evidence" value="ECO:0007669"/>
    <property type="project" value="InterPro"/>
</dbReference>
<dbReference type="GO" id="GO:0006412">
    <property type="term" value="P:translation"/>
    <property type="evidence" value="ECO:0007669"/>
    <property type="project" value="UniProtKB-UniRule"/>
</dbReference>
<dbReference type="FunFam" id="3.30.1370.30:FF:000002">
    <property type="entry name" value="30S ribosomal protein S8"/>
    <property type="match status" value="1"/>
</dbReference>
<dbReference type="FunFam" id="3.30.1490.10:FF:000001">
    <property type="entry name" value="30S ribosomal protein S8"/>
    <property type="match status" value="1"/>
</dbReference>
<dbReference type="Gene3D" id="3.30.1370.30">
    <property type="match status" value="1"/>
</dbReference>
<dbReference type="Gene3D" id="3.30.1490.10">
    <property type="match status" value="1"/>
</dbReference>
<dbReference type="HAMAP" id="MF_01302_B">
    <property type="entry name" value="Ribosomal_uS8_B"/>
    <property type="match status" value="1"/>
</dbReference>
<dbReference type="InterPro" id="IPR000630">
    <property type="entry name" value="Ribosomal_uS8"/>
</dbReference>
<dbReference type="InterPro" id="IPR047863">
    <property type="entry name" value="Ribosomal_uS8_CS"/>
</dbReference>
<dbReference type="InterPro" id="IPR035987">
    <property type="entry name" value="Ribosomal_uS8_sf"/>
</dbReference>
<dbReference type="NCBIfam" id="NF001109">
    <property type="entry name" value="PRK00136.1"/>
    <property type="match status" value="1"/>
</dbReference>
<dbReference type="PANTHER" id="PTHR11758">
    <property type="entry name" value="40S RIBOSOMAL PROTEIN S15A"/>
    <property type="match status" value="1"/>
</dbReference>
<dbReference type="Pfam" id="PF00410">
    <property type="entry name" value="Ribosomal_S8"/>
    <property type="match status" value="1"/>
</dbReference>
<dbReference type="SUPFAM" id="SSF56047">
    <property type="entry name" value="Ribosomal protein S8"/>
    <property type="match status" value="1"/>
</dbReference>
<dbReference type="PROSITE" id="PS00053">
    <property type="entry name" value="RIBOSOMAL_S8"/>
    <property type="match status" value="1"/>
</dbReference>